<keyword id="KW-0002">3D-structure</keyword>
<keyword id="KW-1283">Bacterial microcompartment</keyword>
<keyword id="KW-0120">Carbon dioxide fixation</keyword>
<keyword id="KW-1282">Carboxysome</keyword>
<keyword id="KW-0602">Photosynthesis</keyword>
<keyword id="KW-1185">Reference proteome</keyword>
<proteinExistence type="evidence at protein level"/>
<organism>
    <name type="scientific">Gloeobacter violaceus (strain ATCC 29082 / PCC 7421)</name>
    <dbReference type="NCBI Taxonomy" id="251221"/>
    <lineage>
        <taxon>Bacteria</taxon>
        <taxon>Bacillati</taxon>
        <taxon>Cyanobacteriota</taxon>
        <taxon>Cyanophyceae</taxon>
        <taxon>Gloeobacterales</taxon>
        <taxon>Gloeobacteraceae</taxon>
        <taxon>Gloeobacter</taxon>
    </lineage>
</organism>
<name>CCML_GLOVI</name>
<protein>
    <recommendedName>
        <fullName evidence="3">Carboxysome shell vertex protein CcmL</fullName>
    </recommendedName>
    <alternativeName>
        <fullName evidence="3">Carbon dioxide concentrating mechanism protein CcmL</fullName>
    </alternativeName>
</protein>
<gene>
    <name evidence="3" type="primary">ccmL</name>
    <name evidence="5" type="synonym">gvip287</name>
    <name type="ordered locus">gll2094</name>
</gene>
<feature type="chain" id="PRO_0000451289" description="Carboxysome shell vertex protein CcmL">
    <location>
        <begin position="1"/>
        <end position="100"/>
    </location>
</feature>
<feature type="domain" description="BMV" evidence="3">
    <location>
        <begin position="1"/>
        <end position="83"/>
    </location>
</feature>
<feature type="strand" evidence="8">
    <location>
        <begin position="2"/>
        <end position="11"/>
    </location>
</feature>
<feature type="strand" evidence="8">
    <location>
        <begin position="13"/>
        <end position="15"/>
    </location>
</feature>
<feature type="helix" evidence="8">
    <location>
        <begin position="17"/>
        <end position="19"/>
    </location>
</feature>
<feature type="strand" evidence="8">
    <location>
        <begin position="24"/>
        <end position="30"/>
    </location>
</feature>
<feature type="strand" evidence="8">
    <location>
        <begin position="36"/>
        <end position="44"/>
    </location>
</feature>
<feature type="strand" evidence="8">
    <location>
        <begin position="54"/>
        <end position="59"/>
    </location>
</feature>
<feature type="helix" evidence="8">
    <location>
        <begin position="60"/>
        <end position="64"/>
    </location>
</feature>
<feature type="strand" evidence="8">
    <location>
        <begin position="76"/>
        <end position="81"/>
    </location>
</feature>
<feature type="strand" evidence="8">
    <location>
        <begin position="84"/>
        <end position="87"/>
    </location>
</feature>
<feature type="strand" evidence="8">
    <location>
        <begin position="90"/>
        <end position="94"/>
    </location>
</feature>
<reference key="1">
    <citation type="journal article" date="2003" name="DNA Res.">
        <title>Complete genome structure of Gloeobacter violaceus PCC 7421, a cyanobacterium that lacks thylakoids.</title>
        <authorList>
            <person name="Nakamura Y."/>
            <person name="Kaneko T."/>
            <person name="Sato S."/>
            <person name="Mimuro M."/>
            <person name="Miyashita H."/>
            <person name="Tsuchiya T."/>
            <person name="Sasamoto S."/>
            <person name="Watanabe A."/>
            <person name="Kawashima K."/>
            <person name="Kishida Y."/>
            <person name="Kiyokawa C."/>
            <person name="Kohara M."/>
            <person name="Matsumoto M."/>
            <person name="Matsuno A."/>
            <person name="Nakazaki N."/>
            <person name="Shimpo S."/>
            <person name="Takeuchi C."/>
            <person name="Yamada M."/>
            <person name="Tabata S."/>
        </authorList>
    </citation>
    <scope>NUCLEOTIDE SEQUENCE [LARGE SCALE GENOMIC DNA]</scope>
    <source>
        <strain>ATCC 29082 / PCC 7421</strain>
    </source>
</reference>
<reference evidence="7" key="2">
    <citation type="journal article" date="2013" name="Photosyn. Res.">
        <title>Two new high-resolution crystal structures of carboxysome pentamer proteins reveal high structural conservation of CcmL orthologs among distantly related cyanobacterial species.</title>
        <authorList>
            <person name="Sutter M."/>
            <person name="Wilson S.C."/>
            <person name="Deutsch S."/>
            <person name="Kerfeld C.A."/>
        </authorList>
    </citation>
    <scope>X-RAY CRYSTALLOGRAPHY (1.70 ANGSTROMS)</scope>
    <scope>SUBUNIT</scope>
    <scope>DOMAIN</scope>
    <source>
        <strain>ATCC 29082 / PCC 7421</strain>
    </source>
</reference>
<evidence type="ECO:0000250" key="1">
    <source>
        <dbReference type="UniProtKB" id="P72759"/>
    </source>
</evidence>
<evidence type="ECO:0000250" key="2">
    <source>
        <dbReference type="UniProtKB" id="Q03512"/>
    </source>
</evidence>
<evidence type="ECO:0000255" key="3">
    <source>
        <dbReference type="HAMAP-Rule" id="MF_00858"/>
    </source>
</evidence>
<evidence type="ECO:0000269" key="4">
    <source>
    </source>
</evidence>
<evidence type="ECO:0000303" key="5">
    <source>
    </source>
</evidence>
<evidence type="ECO:0000305" key="6">
    <source>
    </source>
</evidence>
<evidence type="ECO:0007744" key="7">
    <source>
        <dbReference type="PDB" id="4JW0"/>
    </source>
</evidence>
<evidence type="ECO:0007829" key="8">
    <source>
        <dbReference type="PDB" id="4JW0"/>
    </source>
</evidence>
<dbReference type="EMBL" id="BA000045">
    <property type="protein sequence ID" value="BAC90035.1"/>
    <property type="molecule type" value="Genomic_DNA"/>
</dbReference>
<dbReference type="RefSeq" id="NP_925040.1">
    <property type="nucleotide sequence ID" value="NC_005125.1"/>
</dbReference>
<dbReference type="RefSeq" id="WP_011142092.1">
    <property type="nucleotide sequence ID" value="NC_005125.1"/>
</dbReference>
<dbReference type="PDB" id="4JW0">
    <property type="method" value="X-ray"/>
    <property type="resolution" value="1.70 A"/>
    <property type="chains" value="A/B/C/D/E=1-100"/>
</dbReference>
<dbReference type="PDBsum" id="4JW0"/>
<dbReference type="SMR" id="Q7NIT8"/>
<dbReference type="STRING" id="251221.gene:10759587"/>
<dbReference type="EnsemblBacteria" id="BAC90035">
    <property type="protein sequence ID" value="BAC90035"/>
    <property type="gene ID" value="BAC90035"/>
</dbReference>
<dbReference type="KEGG" id="gvi:gll2094"/>
<dbReference type="PATRIC" id="fig|251221.4.peg.2129"/>
<dbReference type="eggNOG" id="COG4576">
    <property type="taxonomic scope" value="Bacteria"/>
</dbReference>
<dbReference type="HOGENOM" id="CLU_148498_0_1_3"/>
<dbReference type="InParanoid" id="Q7NIT8"/>
<dbReference type="OrthoDB" id="196195at2"/>
<dbReference type="PhylomeDB" id="Q7NIT8"/>
<dbReference type="EvolutionaryTrace" id="Q7NIT8"/>
<dbReference type="Proteomes" id="UP000000557">
    <property type="component" value="Chromosome"/>
</dbReference>
<dbReference type="GO" id="GO:0031470">
    <property type="term" value="C:carboxysome"/>
    <property type="evidence" value="ECO:0007669"/>
    <property type="project" value="UniProtKB-SubCell"/>
</dbReference>
<dbReference type="GO" id="GO:0043886">
    <property type="term" value="F:structural constituent of carboxysome shell"/>
    <property type="evidence" value="ECO:0007669"/>
    <property type="project" value="UniProtKB-UniRule"/>
</dbReference>
<dbReference type="GO" id="GO:0015977">
    <property type="term" value="P:carbon fixation"/>
    <property type="evidence" value="ECO:0007669"/>
    <property type="project" value="UniProtKB-UniRule"/>
</dbReference>
<dbReference type="GO" id="GO:0015979">
    <property type="term" value="P:photosynthesis"/>
    <property type="evidence" value="ECO:0007669"/>
    <property type="project" value="UniProtKB-KW"/>
</dbReference>
<dbReference type="CDD" id="cd01614">
    <property type="entry name" value="EutN_CcmL"/>
    <property type="match status" value="1"/>
</dbReference>
<dbReference type="Gene3D" id="2.40.50.220">
    <property type="entry name" value="EutN/Ccml"/>
    <property type="match status" value="1"/>
</dbReference>
<dbReference type="HAMAP" id="MF_00858">
    <property type="entry name" value="CcmL"/>
    <property type="match status" value="1"/>
</dbReference>
<dbReference type="InterPro" id="IPR046387">
    <property type="entry name" value="CcmL"/>
</dbReference>
<dbReference type="InterPro" id="IPR004992">
    <property type="entry name" value="EutN_CcmL"/>
</dbReference>
<dbReference type="InterPro" id="IPR036677">
    <property type="entry name" value="EutN_CcmL_sf"/>
</dbReference>
<dbReference type="PANTHER" id="PTHR36539:SF1">
    <property type="entry name" value="BACTERIAL MICROCOMPARTMENT SHELL VERTEX PROTEIN EUTN"/>
    <property type="match status" value="1"/>
</dbReference>
<dbReference type="PANTHER" id="PTHR36539">
    <property type="entry name" value="ETHANOLAMINE UTILIZATION PROTEIN EUTN"/>
    <property type="match status" value="1"/>
</dbReference>
<dbReference type="Pfam" id="PF03319">
    <property type="entry name" value="EutN_CcmL"/>
    <property type="match status" value="1"/>
</dbReference>
<dbReference type="SUPFAM" id="SSF159133">
    <property type="entry name" value="EutN/CcmL-like"/>
    <property type="match status" value="1"/>
</dbReference>
<dbReference type="PROSITE" id="PS51932">
    <property type="entry name" value="BMV"/>
    <property type="match status" value="1"/>
</dbReference>
<accession>Q7NIT8</accession>
<comment type="function">
    <text evidence="1 3">Probably forms vertices in the carboxysome, a polyhedral inclusion where RuBisCO (ribulose bisphosphate carboxylase, rbcL-rbcS) is sequestered. Has been modeled to induce curvature upon insertion into an otherwise flat hexagonal molecular layer of CcmK subunits.</text>
</comment>
<comment type="subunit">
    <text evidence="1 4">Homopentamer (PubMed:23949415). Interacts with full-length CcmM (By similarity).</text>
</comment>
<comment type="subcellular location">
    <subcellularLocation>
        <location evidence="2 3">Carboxysome</location>
    </subcellularLocation>
    <text evidence="6">Probably forms vertices in the carboxysome.</text>
</comment>
<comment type="domain">
    <text evidence="4">The tight homopentamer forms a pore with an opening of about 4 Angstroms in diameter which opens into a wider tunnel at the base of the truncated pyramid. The pore is positively charged.</text>
</comment>
<comment type="similarity">
    <text evidence="3">Belongs to the CcmL/EutN family. CcmL subfamily.</text>
</comment>
<sequence>MQIGRVRGTVVSSQKEPSMVGVKFLLLQLIDEAGQPLPQYEVAADGVGAGLDEWVLFSRGSAARQVAGSEKRPVDAVVIGIIDTVSVDNRPLYSKKDQYR</sequence>